<accession>P35901</accession>
<feature type="chain" id="PRO_0000030260" description="Protein RecA, 1st part">
    <location>
        <begin position="1"/>
        <end position="205"/>
    </location>
</feature>
<feature type="chain" id="PRO_0000030261" description="Mle RecA intein">
    <location>
        <begin position="206"/>
        <end position="570"/>
    </location>
</feature>
<feature type="chain" id="PRO_0000030262" description="Protein RecA, 2nd part">
    <location>
        <begin position="571"/>
        <end position="711"/>
    </location>
</feature>
<feature type="domain" description="DOD-type homing endonuclease">
    <location>
        <begin position="320"/>
        <end position="420"/>
    </location>
</feature>
<feature type="binding site" evidence="1">
    <location>
        <begin position="67"/>
        <end position="74"/>
    </location>
    <ligand>
        <name>ATP</name>
        <dbReference type="ChEBI" id="CHEBI:30616"/>
    </ligand>
</feature>
<dbReference type="EMBL" id="X73822">
    <property type="protein sequence ID" value="CAA52040.1"/>
    <property type="molecule type" value="Genomic_DNA"/>
</dbReference>
<dbReference type="EMBL" id="U00019">
    <property type="protein sequence ID" value="AAA17277.1"/>
    <property type="molecule type" value="Genomic_DNA"/>
</dbReference>
<dbReference type="EMBL" id="AL583920">
    <property type="protein sequence ID" value="CAC31368.1"/>
    <property type="molecule type" value="Genomic_DNA"/>
</dbReference>
<dbReference type="PIR" id="S37025">
    <property type="entry name" value="S37025"/>
</dbReference>
<dbReference type="RefSeq" id="NP_301732.1">
    <property type="nucleotide sequence ID" value="NC_002677.1"/>
</dbReference>
<dbReference type="RefSeq" id="WP_010908056.1">
    <property type="nucleotide sequence ID" value="NC_002677.1"/>
</dbReference>
<dbReference type="SMR" id="P35901"/>
<dbReference type="STRING" id="272631.gene:17574813"/>
<dbReference type="MEROPS" id="N10.009"/>
<dbReference type="KEGG" id="mle:ML0987"/>
<dbReference type="PATRIC" id="fig|272631.5.peg.1789"/>
<dbReference type="Leproma" id="ML0987"/>
<dbReference type="eggNOG" id="COG0468">
    <property type="taxonomic scope" value="Bacteria"/>
</dbReference>
<dbReference type="eggNOG" id="COG1372">
    <property type="taxonomic scope" value="Bacteria"/>
</dbReference>
<dbReference type="HOGENOM" id="CLU_019600_1_0_11"/>
<dbReference type="OrthoDB" id="9776733at2"/>
<dbReference type="Proteomes" id="UP000000806">
    <property type="component" value="Chromosome"/>
</dbReference>
<dbReference type="GO" id="GO:0005829">
    <property type="term" value="C:cytosol"/>
    <property type="evidence" value="ECO:0007669"/>
    <property type="project" value="TreeGrafter"/>
</dbReference>
<dbReference type="GO" id="GO:0005524">
    <property type="term" value="F:ATP binding"/>
    <property type="evidence" value="ECO:0007669"/>
    <property type="project" value="UniProtKB-UniRule"/>
</dbReference>
<dbReference type="GO" id="GO:0016887">
    <property type="term" value="F:ATP hydrolysis activity"/>
    <property type="evidence" value="ECO:0007669"/>
    <property type="project" value="InterPro"/>
</dbReference>
<dbReference type="GO" id="GO:0140664">
    <property type="term" value="F:ATP-dependent DNA damage sensor activity"/>
    <property type="evidence" value="ECO:0007669"/>
    <property type="project" value="InterPro"/>
</dbReference>
<dbReference type="GO" id="GO:0003684">
    <property type="term" value="F:damaged DNA binding"/>
    <property type="evidence" value="ECO:0007669"/>
    <property type="project" value="UniProtKB-UniRule"/>
</dbReference>
<dbReference type="GO" id="GO:0004519">
    <property type="term" value="F:endonuclease activity"/>
    <property type="evidence" value="ECO:0007669"/>
    <property type="project" value="InterPro"/>
</dbReference>
<dbReference type="GO" id="GO:0003697">
    <property type="term" value="F:single-stranded DNA binding"/>
    <property type="evidence" value="ECO:0007669"/>
    <property type="project" value="UniProtKB-UniRule"/>
</dbReference>
<dbReference type="GO" id="GO:0006310">
    <property type="term" value="P:DNA recombination"/>
    <property type="evidence" value="ECO:0007669"/>
    <property type="project" value="UniProtKB-UniRule"/>
</dbReference>
<dbReference type="GO" id="GO:0006281">
    <property type="term" value="P:DNA repair"/>
    <property type="evidence" value="ECO:0007669"/>
    <property type="project" value="UniProtKB-UniRule"/>
</dbReference>
<dbReference type="GO" id="GO:0016539">
    <property type="term" value="P:intein-mediated protein splicing"/>
    <property type="evidence" value="ECO:0007669"/>
    <property type="project" value="InterPro"/>
</dbReference>
<dbReference type="GO" id="GO:0009432">
    <property type="term" value="P:SOS response"/>
    <property type="evidence" value="ECO:0007669"/>
    <property type="project" value="UniProtKB-UniRule"/>
</dbReference>
<dbReference type="CDD" id="cd00081">
    <property type="entry name" value="Hint"/>
    <property type="match status" value="2"/>
</dbReference>
<dbReference type="CDD" id="cd00983">
    <property type="entry name" value="RecA"/>
    <property type="match status" value="1"/>
</dbReference>
<dbReference type="Gene3D" id="3.10.28.10">
    <property type="entry name" value="Homing endonucleases"/>
    <property type="match status" value="1"/>
</dbReference>
<dbReference type="Gene3D" id="3.40.50.300">
    <property type="entry name" value="P-loop containing nucleotide triphosphate hydrolases"/>
    <property type="match status" value="2"/>
</dbReference>
<dbReference type="Gene3D" id="3.30.250.10">
    <property type="entry name" value="RecA protein, C-terminal domain"/>
    <property type="match status" value="1"/>
</dbReference>
<dbReference type="HAMAP" id="MF_00268">
    <property type="entry name" value="RecA"/>
    <property type="match status" value="1"/>
</dbReference>
<dbReference type="InterPro" id="IPR003593">
    <property type="entry name" value="AAA+_ATPase"/>
</dbReference>
<dbReference type="InterPro" id="IPR013765">
    <property type="entry name" value="DNA_recomb/repair_RecA"/>
</dbReference>
<dbReference type="InterPro" id="IPR020584">
    <property type="entry name" value="DNA_recomb/repair_RecA_CS"/>
</dbReference>
<dbReference type="InterPro" id="IPR003586">
    <property type="entry name" value="Hint_dom_C"/>
</dbReference>
<dbReference type="InterPro" id="IPR003587">
    <property type="entry name" value="Hint_dom_N"/>
</dbReference>
<dbReference type="InterPro" id="IPR036844">
    <property type="entry name" value="Hint_dom_sf"/>
</dbReference>
<dbReference type="InterPro" id="IPR027434">
    <property type="entry name" value="Homing_endonucl"/>
</dbReference>
<dbReference type="InterPro" id="IPR030934">
    <property type="entry name" value="Intein_C"/>
</dbReference>
<dbReference type="InterPro" id="IPR004042">
    <property type="entry name" value="Intein_endonuc_central"/>
</dbReference>
<dbReference type="InterPro" id="IPR006141">
    <property type="entry name" value="Intein_N"/>
</dbReference>
<dbReference type="InterPro" id="IPR004860">
    <property type="entry name" value="LAGLIDADG_dom"/>
</dbReference>
<dbReference type="InterPro" id="IPR027417">
    <property type="entry name" value="P-loop_NTPase"/>
</dbReference>
<dbReference type="InterPro" id="IPR049261">
    <property type="entry name" value="RecA-like_C"/>
</dbReference>
<dbReference type="InterPro" id="IPR049428">
    <property type="entry name" value="RecA-like_N"/>
</dbReference>
<dbReference type="InterPro" id="IPR020588">
    <property type="entry name" value="RecA_ATP-bd"/>
</dbReference>
<dbReference type="InterPro" id="IPR023400">
    <property type="entry name" value="RecA_C_sf"/>
</dbReference>
<dbReference type="InterPro" id="IPR020587">
    <property type="entry name" value="RecA_monomer-monomer_interface"/>
</dbReference>
<dbReference type="NCBIfam" id="TIGR01443">
    <property type="entry name" value="intein_Cterm"/>
    <property type="match status" value="1"/>
</dbReference>
<dbReference type="NCBIfam" id="TIGR01445">
    <property type="entry name" value="intein_Nterm"/>
    <property type="match status" value="1"/>
</dbReference>
<dbReference type="NCBIfam" id="TIGR02012">
    <property type="entry name" value="tigrfam_recA"/>
    <property type="match status" value="1"/>
</dbReference>
<dbReference type="PANTHER" id="PTHR45900:SF1">
    <property type="entry name" value="MITOCHONDRIAL DNA REPAIR PROTEIN RECA HOMOLOG-RELATED"/>
    <property type="match status" value="1"/>
</dbReference>
<dbReference type="PANTHER" id="PTHR45900">
    <property type="entry name" value="RECA"/>
    <property type="match status" value="1"/>
</dbReference>
<dbReference type="Pfam" id="PF03161">
    <property type="entry name" value="LAGLIDADG_2"/>
    <property type="match status" value="1"/>
</dbReference>
<dbReference type="Pfam" id="PF00154">
    <property type="entry name" value="RecA"/>
    <property type="match status" value="2"/>
</dbReference>
<dbReference type="Pfam" id="PF21096">
    <property type="entry name" value="RecA_C"/>
    <property type="match status" value="1"/>
</dbReference>
<dbReference type="PRINTS" id="PR00142">
    <property type="entry name" value="RECA"/>
</dbReference>
<dbReference type="SMART" id="SM00382">
    <property type="entry name" value="AAA"/>
    <property type="match status" value="1"/>
</dbReference>
<dbReference type="SMART" id="SM00305">
    <property type="entry name" value="HintC"/>
    <property type="match status" value="1"/>
</dbReference>
<dbReference type="SMART" id="SM00306">
    <property type="entry name" value="HintN"/>
    <property type="match status" value="1"/>
</dbReference>
<dbReference type="SUPFAM" id="SSF51294">
    <property type="entry name" value="Hedgehog/intein (Hint) domain"/>
    <property type="match status" value="1"/>
</dbReference>
<dbReference type="SUPFAM" id="SSF55608">
    <property type="entry name" value="Homing endonucleases"/>
    <property type="match status" value="1"/>
</dbReference>
<dbReference type="SUPFAM" id="SSF52540">
    <property type="entry name" value="P-loop containing nucleoside triphosphate hydrolases"/>
    <property type="match status" value="2"/>
</dbReference>
<dbReference type="SUPFAM" id="SSF54752">
    <property type="entry name" value="RecA protein, C-terminal domain"/>
    <property type="match status" value="1"/>
</dbReference>
<dbReference type="PROSITE" id="PS50818">
    <property type="entry name" value="INTEIN_C_TER"/>
    <property type="match status" value="1"/>
</dbReference>
<dbReference type="PROSITE" id="PS50819">
    <property type="entry name" value="INTEIN_ENDONUCLEASE"/>
    <property type="match status" value="1"/>
</dbReference>
<dbReference type="PROSITE" id="PS50817">
    <property type="entry name" value="INTEIN_N_TER"/>
    <property type="match status" value="1"/>
</dbReference>
<dbReference type="PROSITE" id="PS00321">
    <property type="entry name" value="RECA_1"/>
    <property type="match status" value="1"/>
</dbReference>
<dbReference type="PROSITE" id="PS50162">
    <property type="entry name" value="RECA_2"/>
    <property type="match status" value="1"/>
</dbReference>
<dbReference type="PROSITE" id="PS50163">
    <property type="entry name" value="RECA_3"/>
    <property type="match status" value="1"/>
</dbReference>
<protein>
    <recommendedName>
        <fullName>Protein RecA</fullName>
    </recommendedName>
    <alternativeName>
        <fullName>Recombinase A</fullName>
    </alternativeName>
    <component>
        <recommendedName>
            <fullName>Mle RecA intein</fullName>
        </recommendedName>
    </component>
</protein>
<sequence>MAQVPDREKALELAMAQIEKNYGKGSVMRLGDEMCQPISVIPTGSIALDVALGIGGLPRGRIVEIYGPESSGKTTVALHAVANAQAVGGVAAFIDAEHALEPEYAKKLGVDTDSLLVSQPDTGEQALEIADMLIRSGALDIVVIDSVAALVPRAELEGEMGDSYVGLQARLMSQALRKMTGALSNSGTTAIFINQLREKIGVMFGCMNYSTRVTLADGSTEKIGKIVNNKMDVRVLSYDPVTDRIVPRKVVNWFNNGPAEQFLQFTVEKSGSNGKSQFAATPNHLIRTPGGWTEAGNLIAGDRVLAVEPHMLSDQQFQVVLGSLMGDGNLSPNLCDRNGVRFRLLGYGCKQVEYLQWKKALMGNIRHTVRENSMGASFIDFTPLPELVELQRAVYLGDGKKFLSEEYLKALTPLVLAIWYMDDGSFTVGSKRVQERTAGGSGRIEICVDAMTEGTRVRLRDYLCDTHGLDVRLREVGSAGKAVLVFSTAATAKFQSLIAPYVAPSMEYKLLPQFRGRGSVTPQFVEPTQQLVPARVLDVHVKLSTRSMNRFDIEVEGNHNYFVDGVMVHNSPETTTGGKALKFYASVRMDVRRIETLKDGVDAVGNRTRVKIVKNKVSPPFKQAEFDILYGKGISREGSLIDMGVEQGFVRKSGSWFTYEGEQLGQGKENARNFLLENADVANEIEKKIKEKLGIGAVVTDDDILPTPVDF</sequence>
<keyword id="KW-0067">ATP-binding</keyword>
<keyword id="KW-0068">Autocatalytic cleavage</keyword>
<keyword id="KW-0963">Cytoplasm</keyword>
<keyword id="KW-0227">DNA damage</keyword>
<keyword id="KW-0233">DNA recombination</keyword>
<keyword id="KW-0234">DNA repair</keyword>
<keyword id="KW-0238">DNA-binding</keyword>
<keyword id="KW-0547">Nucleotide-binding</keyword>
<keyword id="KW-0651">Protein splicing</keyword>
<keyword id="KW-1185">Reference proteome</keyword>
<keyword id="KW-0742">SOS response</keyword>
<proteinExistence type="inferred from homology"/>
<evidence type="ECO:0000250" key="1"/>
<evidence type="ECO:0000305" key="2"/>
<gene>
    <name type="primary">recA</name>
    <name type="ordered locus">ML0987</name>
</gene>
<reference key="1">
    <citation type="journal article" date="1994" name="EMBO J.">
        <title>Evidence of selection for protein introns in the recAs of pathogenic mycobacteria.</title>
        <authorList>
            <person name="Davis E.O."/>
            <person name="Thangaraj H.S."/>
            <person name="Brooks P.C."/>
            <person name="Colston M.J."/>
        </authorList>
    </citation>
    <scope>NUCLEOTIDE SEQUENCE [GENOMIC DNA]</scope>
</reference>
<reference key="2">
    <citation type="submission" date="1994-03" db="EMBL/GenBank/DDBJ databases">
        <authorList>
            <person name="Smith D.R."/>
            <person name="Robison K."/>
        </authorList>
    </citation>
    <scope>NUCLEOTIDE SEQUENCE [GENOMIC DNA]</scope>
</reference>
<reference key="3">
    <citation type="journal article" date="2001" name="Nature">
        <title>Massive gene decay in the leprosy bacillus.</title>
        <authorList>
            <person name="Cole S.T."/>
            <person name="Eiglmeier K."/>
            <person name="Parkhill J."/>
            <person name="James K.D."/>
            <person name="Thomson N.R."/>
            <person name="Wheeler P.R."/>
            <person name="Honore N."/>
            <person name="Garnier T."/>
            <person name="Churcher C.M."/>
            <person name="Harris D.E."/>
            <person name="Mungall K.L."/>
            <person name="Basham D."/>
            <person name="Brown D."/>
            <person name="Chillingworth T."/>
            <person name="Connor R."/>
            <person name="Davies R.M."/>
            <person name="Devlin K."/>
            <person name="Duthoy S."/>
            <person name="Feltwell T."/>
            <person name="Fraser A."/>
            <person name="Hamlin N."/>
            <person name="Holroyd S."/>
            <person name="Hornsby T."/>
            <person name="Jagels K."/>
            <person name="Lacroix C."/>
            <person name="Maclean J."/>
            <person name="Moule S."/>
            <person name="Murphy L.D."/>
            <person name="Oliver K."/>
            <person name="Quail M.A."/>
            <person name="Rajandream M.A."/>
            <person name="Rutherford K.M."/>
            <person name="Rutter S."/>
            <person name="Seeger K."/>
            <person name="Simon S."/>
            <person name="Simmonds M."/>
            <person name="Skelton J."/>
            <person name="Squares R."/>
            <person name="Squares S."/>
            <person name="Stevens K."/>
            <person name="Taylor K."/>
            <person name="Whitehead S."/>
            <person name="Woodward J.R."/>
            <person name="Barrell B.G."/>
        </authorList>
    </citation>
    <scope>NUCLEOTIDE SEQUENCE [LARGE SCALE GENOMIC DNA]</scope>
    <source>
        <strain>TN</strain>
    </source>
</reference>
<organism>
    <name type="scientific">Mycobacterium leprae (strain TN)</name>
    <dbReference type="NCBI Taxonomy" id="272631"/>
    <lineage>
        <taxon>Bacteria</taxon>
        <taxon>Bacillati</taxon>
        <taxon>Actinomycetota</taxon>
        <taxon>Actinomycetes</taxon>
        <taxon>Mycobacteriales</taxon>
        <taxon>Mycobacteriaceae</taxon>
        <taxon>Mycobacterium</taxon>
    </lineage>
</organism>
<name>RECA_MYCLE</name>
<comment type="function">
    <text evidence="1">Can catalyze the hydrolysis of ATP in the presence of single-stranded DNA, the ATP-dependent uptake of single-stranded DNA by duplex DNA, and the ATP-dependent hybridization of homologous single-stranded DNAs. It interacts with LexA causing its activation and leading to its autocatalytic cleavage (By similarity).</text>
</comment>
<comment type="subcellular location">
    <subcellularLocation>
        <location evidence="1">Cytoplasm</location>
    </subcellularLocation>
</comment>
<comment type="PTM">
    <text>This protein undergoes a protein self splicing that involves a post-translational excision of the intervening region (intein) followed by peptide ligation.</text>
</comment>
<comment type="similarity">
    <text evidence="2">Belongs to the RecA family.</text>
</comment>